<keyword id="KW-1185">Reference proteome</keyword>
<reference key="1">
    <citation type="submission" date="2006-01" db="EMBL/GenBank/DDBJ databases">
        <authorList>
            <consortium name="NIH - Mammalian Gene Collection (MGC) project"/>
        </authorList>
    </citation>
    <scope>NUCLEOTIDE SEQUENCE [LARGE SCALE MRNA]</scope>
    <source>
        <strain>Hereford</strain>
        <tissue>Testis</tissue>
    </source>
</reference>
<dbReference type="EMBL" id="BC112598">
    <property type="protein sequence ID" value="AAI12599.1"/>
    <property type="molecule type" value="mRNA"/>
</dbReference>
<dbReference type="RefSeq" id="NP_001070559.1">
    <property type="nucleotide sequence ID" value="NM_001077091.1"/>
</dbReference>
<dbReference type="RefSeq" id="XP_059740896.1">
    <property type="nucleotide sequence ID" value="XM_059884913.1"/>
</dbReference>
<dbReference type="SMR" id="Q2KIL1"/>
<dbReference type="FunCoup" id="Q2KIL1">
    <property type="interactions" value="5"/>
</dbReference>
<dbReference type="STRING" id="9913.ENSBTAP00000041118"/>
<dbReference type="PaxDb" id="9913-ENSBTAP00000041118"/>
<dbReference type="Ensembl" id="ENSBTAT00000043557.3">
    <property type="protein sequence ID" value="ENSBTAP00000041118.3"/>
    <property type="gene ID" value="ENSBTAG00000030809.3"/>
</dbReference>
<dbReference type="GeneID" id="768032"/>
<dbReference type="KEGG" id="bta:768032"/>
<dbReference type="CTD" id="768032"/>
<dbReference type="VEuPathDB" id="HostDB:ENSBTAG00000030809"/>
<dbReference type="eggNOG" id="ENOG502SCCV">
    <property type="taxonomic scope" value="Eukaryota"/>
</dbReference>
<dbReference type="GeneTree" id="ENSGT00390000010146"/>
<dbReference type="InParanoid" id="Q2KIL1"/>
<dbReference type="OMA" id="HPMENRN"/>
<dbReference type="OrthoDB" id="9905507at2759"/>
<dbReference type="Proteomes" id="UP000009136">
    <property type="component" value="Chromosome 3"/>
</dbReference>
<dbReference type="Bgee" id="ENSBTAG00000030809">
    <property type="expression patterns" value="Expressed in semen and 21 other cell types or tissues"/>
</dbReference>
<dbReference type="InterPro" id="IPR027847">
    <property type="entry name" value="DUF4545"/>
</dbReference>
<dbReference type="PANTHER" id="PTHR36873">
    <property type="entry name" value="HYPOTHETICAL GENE SUPPORTED BY BC079057"/>
    <property type="match status" value="1"/>
</dbReference>
<dbReference type="PANTHER" id="PTHR36873:SF1">
    <property type="entry name" value="HYPOTHETICAL GENE SUPPORTED BY BC079057"/>
    <property type="match status" value="1"/>
</dbReference>
<dbReference type="Pfam" id="PF15078">
    <property type="entry name" value="DUF4545"/>
    <property type="match status" value="2"/>
</dbReference>
<organism>
    <name type="scientific">Bos taurus</name>
    <name type="common">Bovine</name>
    <dbReference type="NCBI Taxonomy" id="9913"/>
    <lineage>
        <taxon>Eukaryota</taxon>
        <taxon>Metazoa</taxon>
        <taxon>Chordata</taxon>
        <taxon>Craniata</taxon>
        <taxon>Vertebrata</taxon>
        <taxon>Euteleostomi</taxon>
        <taxon>Mammalia</taxon>
        <taxon>Eutheria</taxon>
        <taxon>Laurasiatheria</taxon>
        <taxon>Artiodactyla</taxon>
        <taxon>Ruminantia</taxon>
        <taxon>Pecora</taxon>
        <taxon>Bovidae</taxon>
        <taxon>Bovinae</taxon>
        <taxon>Bos</taxon>
    </lineage>
</organism>
<protein>
    <recommendedName>
        <fullName>Uncharacterized protein C1orf141 homolog</fullName>
    </recommendedName>
</protein>
<feature type="chain" id="PRO_0000294455" description="Uncharacterized protein C1orf141 homolog">
    <location>
        <begin position="1"/>
        <end position="430"/>
    </location>
</feature>
<sequence>MAERVLDKLDILDEQAKTLLATRAKKNCLQSQVKRKISVIPLTFDFQLELEKDIATSISKTNSKITKDRSYGTKKPKRYVSFKNMPEPKKSDFQNSNLRPPFLPTNIKTQEIKSIEPVEEYLKSRSIRSFHYLKDIPETEYAKPFQELYSQHRHQCRRTLCSTVFSSVPSNQSHAYKKEDSIYSTKENESIRNDQLNEYSVRQKSLLPLCFEDELIKPDAKIIDIGLVKTVTSHTGKNDTNPIMFHEAGYVQMLLLTKNRLPPHFMKNGNGSPYERSNVVLQRNCEMLKSVARDQSITPSKTQRTLPTTQKKDIPAISFKVSDRVVDDKLRKKTRKQTFKNISWDKLYNFSQTFSSLTKKFVGFLDKTVIQEMSAKTGKFEKMFSTVKPVSEFSASPFKYYSKPSRNILKVHKINNVTPLDDLLNLSSKK</sequence>
<proteinExistence type="evidence at transcript level"/>
<accession>Q2KIL1</accession>
<name>CA141_BOVIN</name>